<evidence type="ECO:0000255" key="1"/>
<evidence type="ECO:0000305" key="2"/>
<feature type="chain" id="PRO_0000173327" description="Lincomycin resistance protein">
    <location>
        <begin position="1"/>
        <end position="481"/>
    </location>
</feature>
<feature type="transmembrane region" description="Helical" evidence="1">
    <location>
        <begin position="30"/>
        <end position="50"/>
    </location>
</feature>
<feature type="transmembrane region" description="Helical" evidence="1">
    <location>
        <begin position="67"/>
        <end position="87"/>
    </location>
</feature>
<feature type="transmembrane region" description="Helical" evidence="1">
    <location>
        <begin position="99"/>
        <end position="119"/>
    </location>
</feature>
<feature type="transmembrane region" description="Helical" evidence="1">
    <location>
        <begin position="127"/>
        <end position="147"/>
    </location>
</feature>
<feature type="transmembrane region" description="Helical" evidence="1">
    <location>
        <begin position="162"/>
        <end position="182"/>
    </location>
</feature>
<feature type="transmembrane region" description="Helical" evidence="1">
    <location>
        <begin position="185"/>
        <end position="205"/>
    </location>
</feature>
<feature type="transmembrane region" description="Helical" evidence="1">
    <location>
        <begin position="215"/>
        <end position="235"/>
    </location>
</feature>
<feature type="transmembrane region" description="Helical" evidence="1">
    <location>
        <begin position="245"/>
        <end position="265"/>
    </location>
</feature>
<feature type="transmembrane region" description="Helical" evidence="1">
    <location>
        <begin position="285"/>
        <end position="305"/>
    </location>
</feature>
<feature type="transmembrane region" description="Helical" evidence="1">
    <location>
        <begin position="318"/>
        <end position="338"/>
    </location>
</feature>
<feature type="transmembrane region" description="Helical" evidence="1">
    <location>
        <begin position="340"/>
        <end position="360"/>
    </location>
</feature>
<feature type="transmembrane region" description="Helical" evidence="1">
    <location>
        <begin position="374"/>
        <end position="394"/>
    </location>
</feature>
<feature type="transmembrane region" description="Helical" evidence="1">
    <location>
        <begin position="421"/>
        <end position="441"/>
    </location>
</feature>
<feature type="transmembrane region" description="Helical" evidence="1">
    <location>
        <begin position="446"/>
        <end position="466"/>
    </location>
</feature>
<gene>
    <name type="primary">lmrA</name>
</gene>
<organism>
    <name type="scientific">Streptomyces lincolnensis</name>
    <dbReference type="NCBI Taxonomy" id="1915"/>
    <lineage>
        <taxon>Bacteria</taxon>
        <taxon>Bacillati</taxon>
        <taxon>Actinomycetota</taxon>
        <taxon>Actinomycetes</taxon>
        <taxon>Kitasatosporales</taxon>
        <taxon>Streptomycetaceae</taxon>
        <taxon>Streptomyces</taxon>
    </lineage>
</organism>
<name>LMRA_STRLN</name>
<keyword id="KW-0046">Antibiotic resistance</keyword>
<keyword id="KW-1003">Cell membrane</keyword>
<keyword id="KW-0472">Membrane</keyword>
<keyword id="KW-0812">Transmembrane</keyword>
<keyword id="KW-1133">Transmembrane helix</keyword>
<keyword id="KW-0813">Transport</keyword>
<comment type="function">
    <text>Proton-dependent transporter. May mediate the efflux of lincomycin.</text>
</comment>
<comment type="subcellular location">
    <subcellularLocation>
        <location>Cell membrane</location>
        <topology>Multi-pass membrane protein</topology>
    </subcellularLocation>
</comment>
<comment type="similarity">
    <text evidence="2">Belongs to the major facilitator superfamily. TCR/Tet family.</text>
</comment>
<proteinExistence type="inferred from homology"/>
<accession>P46104</accession>
<sequence>MSVFARATSLFSRAARTRAADEAARSRSRWVTLVFLAVLQLLIAVDVTVVNIALPAIRDSFHVDTRQLTWVVTGYTVVGGGLLMVGGRIADLFGRRRTLLFGAFLFGASSLAAGLAPNLELLVLARFGQGAGEALSLPAAMSLIACSSRTAPFQGVERLASVASVGLVLGFLLSGVITQLFSWRWIFLINIPLVSLVLVAVLLLVKKDETTARNPVDLPGALLFTAAPLLLIFGVNELGEDEPRLPLAVGSLLAAAVCAAAFVAVERRTAHPLVPLTFFGNRVRLVANGATVLLSAALSTSFFLLTMHLQEERDLSPIEAGLSFLPLGLSLILACVLVRGLIERIGTTGAAVLGMALAGPRHRLFALLPSDNSLLTSVFPGMILLLRMATGLVALQNAALHAVTEADAGVASGVQRCADQLGGASGIAVYVSIGFSPHLGGDWDPFTVAYSLAGIGLIAAVLAVLALSPDRRLAAPREQED</sequence>
<dbReference type="EMBL" id="X59926">
    <property type="protein sequence ID" value="CAA42550.1"/>
    <property type="molecule type" value="Genomic_DNA"/>
</dbReference>
<dbReference type="EMBL" id="X79146">
    <property type="protein sequence ID" value="CAA55745.1"/>
    <property type="molecule type" value="Genomic_DNA"/>
</dbReference>
<dbReference type="PIR" id="S69808">
    <property type="entry name" value="S69808"/>
</dbReference>
<dbReference type="SMR" id="P46104"/>
<dbReference type="STRING" id="1915.SLINC_0232"/>
<dbReference type="TCDB" id="2.A.1.3.9">
    <property type="family name" value="the major facilitator superfamily (mfs)"/>
</dbReference>
<dbReference type="KEGG" id="ag:CAA42550"/>
<dbReference type="GO" id="GO:0005886">
    <property type="term" value="C:plasma membrane"/>
    <property type="evidence" value="ECO:0007669"/>
    <property type="project" value="UniProtKB-SubCell"/>
</dbReference>
<dbReference type="GO" id="GO:0022857">
    <property type="term" value="F:transmembrane transporter activity"/>
    <property type="evidence" value="ECO:0007669"/>
    <property type="project" value="InterPro"/>
</dbReference>
<dbReference type="GO" id="GO:0046677">
    <property type="term" value="P:response to antibiotic"/>
    <property type="evidence" value="ECO:0007669"/>
    <property type="project" value="UniProtKB-KW"/>
</dbReference>
<dbReference type="CDD" id="cd17321">
    <property type="entry name" value="MFS_MMR_MDR_like"/>
    <property type="match status" value="1"/>
</dbReference>
<dbReference type="Gene3D" id="1.20.1250.20">
    <property type="entry name" value="MFS general substrate transporter like domains"/>
    <property type="match status" value="1"/>
</dbReference>
<dbReference type="Gene3D" id="1.20.1720.10">
    <property type="entry name" value="Multidrug resistance protein D"/>
    <property type="match status" value="1"/>
</dbReference>
<dbReference type="InterPro" id="IPR011701">
    <property type="entry name" value="MFS"/>
</dbReference>
<dbReference type="InterPro" id="IPR020846">
    <property type="entry name" value="MFS_dom"/>
</dbReference>
<dbReference type="InterPro" id="IPR036259">
    <property type="entry name" value="MFS_trans_sf"/>
</dbReference>
<dbReference type="InterPro" id="IPR005829">
    <property type="entry name" value="Sugar_transporter_CS"/>
</dbReference>
<dbReference type="NCBIfam" id="NF000031">
    <property type="entry name" value="MFS_efflux_LmrA"/>
    <property type="match status" value="1"/>
</dbReference>
<dbReference type="PANTHER" id="PTHR42718:SF46">
    <property type="entry name" value="BLR6921 PROTEIN"/>
    <property type="match status" value="1"/>
</dbReference>
<dbReference type="PANTHER" id="PTHR42718">
    <property type="entry name" value="MAJOR FACILITATOR SUPERFAMILY MULTIDRUG TRANSPORTER MFSC"/>
    <property type="match status" value="1"/>
</dbReference>
<dbReference type="Pfam" id="PF07690">
    <property type="entry name" value="MFS_1"/>
    <property type="match status" value="1"/>
</dbReference>
<dbReference type="PRINTS" id="PR01036">
    <property type="entry name" value="TCRTETB"/>
</dbReference>
<dbReference type="SUPFAM" id="SSF103473">
    <property type="entry name" value="MFS general substrate transporter"/>
    <property type="match status" value="1"/>
</dbReference>
<dbReference type="PROSITE" id="PS50850">
    <property type="entry name" value="MFS"/>
    <property type="match status" value="1"/>
</dbReference>
<dbReference type="PROSITE" id="PS00216">
    <property type="entry name" value="SUGAR_TRANSPORT_1"/>
    <property type="match status" value="1"/>
</dbReference>
<protein>
    <recommendedName>
        <fullName>Lincomycin resistance protein</fullName>
    </recommendedName>
</protein>
<reference key="1">
    <citation type="journal article" date="1992" name="Mol. Microbiol.">
        <title>Molecular cloning and characterization of two lincomycin-resistance genes, lmrA and lmrB, from Streptomyces lincolnensis 78-11.</title>
        <authorList>
            <person name="Zhang H.Z."/>
            <person name="Schmidt H."/>
            <person name="Piepersberg W."/>
        </authorList>
    </citation>
    <scope>NUCLEOTIDE SEQUENCE [GENOMIC DNA]</scope>
    <source>
        <strain>78-11</strain>
    </source>
</reference>
<reference key="2">
    <citation type="journal article" date="1995" name="Mol. Microbiol.">
        <title>Molecular characterization of the lincomycin-production gene cluster of Streptomyces lincolnensis 78-11.</title>
        <authorList>
            <person name="Peschke U."/>
            <person name="Schmidt H."/>
            <person name="Zhang H.Z."/>
            <person name="Piepersberg W."/>
        </authorList>
    </citation>
    <scope>NUCLEOTIDE SEQUENCE [GENOMIC DNA]</scope>
    <source>
        <strain>78-11</strain>
    </source>
</reference>